<keyword id="KW-0456">Lyase</keyword>
<keyword id="KW-0663">Pyridoxal phosphate</keyword>
<protein>
    <recommendedName>
        <fullName evidence="2">Canavanine gamma-lyase</fullName>
        <shortName evidence="2">CangammaL</shortName>
        <ecNumber evidence="1">4.4.1.43</ecNumber>
    </recommendedName>
</protein>
<organism>
    <name type="scientific">Pseudomonas canavaninivorans</name>
    <dbReference type="NCBI Taxonomy" id="2842348"/>
    <lineage>
        <taxon>Bacteria</taxon>
        <taxon>Pseudomonadati</taxon>
        <taxon>Pseudomonadota</taxon>
        <taxon>Gammaproteobacteria</taxon>
        <taxon>Pseudomonadales</taxon>
        <taxon>Pseudomonadaceae</taxon>
        <taxon>Pseudomonas</taxon>
    </lineage>
</organism>
<gene>
    <name evidence="5" type="ORF">JFQ02_10020</name>
</gene>
<feature type="chain" id="PRO_0000460367" description="Canavanine gamma-lyase">
    <location>
        <begin position="1"/>
        <end position="400"/>
    </location>
</feature>
<feature type="modified residue" description="N6-(pyridoxal phosphate)lysine" evidence="4">
    <location>
        <position position="213"/>
    </location>
</feature>
<feature type="mutagenesis site" description="Loss of activity." evidence="1">
    <original>K</original>
    <variation>A</variation>
    <location>
        <position position="213"/>
    </location>
</feature>
<reference key="1">
    <citation type="journal article" date="2022" name="RSC Chem. Biol.">
        <title>Canavanine utilization via homoserine and hydroxyguanidine by a PLP-dependent gamma-lyase in Pseudomonadaceae and Rhizobiales.</title>
        <authorList>
            <person name="Hauth F."/>
            <person name="Buck H."/>
            <person name="Stanoppi M."/>
            <person name="Hartig J.S."/>
        </authorList>
    </citation>
    <scope>NUCLEOTIDE SEQUENCE [LARGE SCALE GENOMIC DNA]</scope>
    <scope>FUNCTION</scope>
    <scope>CATALYTIC ACTIVITY</scope>
    <scope>REACTION MECHANISM</scope>
    <scope>COFACTOR</scope>
    <scope>BIOPHYSICOCHEMICAL PROPERTIES</scope>
    <scope>INDUCTION</scope>
    <scope>DISRUPTION PHENOTYPE</scope>
    <scope>MUTAGENESIS OF LYS-213</scope>
    <source>
        <strain>DSM 112525 / LMG 32336 / HB002</strain>
    </source>
</reference>
<evidence type="ECO:0000269" key="1">
    <source>
    </source>
</evidence>
<evidence type="ECO:0000303" key="2">
    <source>
    </source>
</evidence>
<evidence type="ECO:0000305" key="3"/>
<evidence type="ECO:0000305" key="4">
    <source>
    </source>
</evidence>
<evidence type="ECO:0000312" key="5">
    <source>
        <dbReference type="EMBL" id="MBJ2347155.1"/>
    </source>
</evidence>
<accession>P0DXC4</accession>
<comment type="function">
    <text evidence="1">Lyase involved in the degradation of canavanine, the delta-oxa-analog of arginine, allowing growth on canavanine as sole nitrogen and carbon source (PubMed:36320885). Catalyzes the elimination of hydroxyguanidine from canavanine with a subsequent water addition to yield homoserine (PubMed:36320885). Is highly specific for canavanine and cannot use methionine, cystathionine or arginine (PubMed:36320885).</text>
</comment>
<comment type="catalytic activity">
    <reaction evidence="1">
        <text>L-canavanine + H2O = N-hydroxyguanidine + L-homoserine</text>
        <dbReference type="Rhea" id="RHEA:75379"/>
        <dbReference type="ChEBI" id="CHEBI:15377"/>
        <dbReference type="ChEBI" id="CHEBI:57476"/>
        <dbReference type="ChEBI" id="CHEBI:78902"/>
        <dbReference type="ChEBI" id="CHEBI:194307"/>
        <dbReference type="EC" id="4.4.1.43"/>
    </reaction>
    <physiologicalReaction direction="left-to-right" evidence="1">
        <dbReference type="Rhea" id="RHEA:75380"/>
    </physiologicalReaction>
</comment>
<comment type="cofactor">
    <cofactor evidence="1">
        <name>pyridoxal 5'-phosphate</name>
        <dbReference type="ChEBI" id="CHEBI:597326"/>
    </cofactor>
</comment>
<comment type="biophysicochemical properties">
    <kinetics>
        <KM evidence="1">590 uM for canavanine</KM>
        <text evidence="1">kcat is 1.34 sec(-1).</text>
    </kinetics>
    <phDependence>
        <text evidence="1">Optimum pH is between 6.9 and 8.0.</text>
    </phDependence>
    <temperatureDependence>
        <text evidence="1">Optimum temperature is between 34.8 and 37 degrees Celsius.</text>
    </temperatureDependence>
</comment>
<comment type="induction">
    <text evidence="1">Up-regulated upon growth on canavanine.</text>
</comment>
<comment type="disruption phenotype">
    <text evidence="1">The deletion mutant is unable to grow on canavanine as sole carbon source while its growth on glucose is not affected.</text>
</comment>
<comment type="similarity">
    <text evidence="3">Belongs to the trans-sulfuration enzymes family.</text>
</comment>
<name>CANGL_PSECO</name>
<dbReference type="EC" id="4.4.1.43" evidence="1"/>
<dbReference type="EMBL" id="JAEKIK010000008">
    <property type="protein sequence ID" value="MBJ2347155.1"/>
    <property type="molecule type" value="Genomic_DNA"/>
</dbReference>
<dbReference type="SMR" id="P0DXC4"/>
<dbReference type="GO" id="GO:0005737">
    <property type="term" value="C:cytoplasm"/>
    <property type="evidence" value="ECO:0007669"/>
    <property type="project" value="TreeGrafter"/>
</dbReference>
<dbReference type="GO" id="GO:0016846">
    <property type="term" value="F:carbon-sulfur lyase activity"/>
    <property type="evidence" value="ECO:0007669"/>
    <property type="project" value="TreeGrafter"/>
</dbReference>
<dbReference type="GO" id="GO:0030170">
    <property type="term" value="F:pyridoxal phosphate binding"/>
    <property type="evidence" value="ECO:0007669"/>
    <property type="project" value="InterPro"/>
</dbReference>
<dbReference type="GO" id="GO:0019346">
    <property type="term" value="P:transsulfuration"/>
    <property type="evidence" value="ECO:0007669"/>
    <property type="project" value="InterPro"/>
</dbReference>
<dbReference type="CDD" id="cd00614">
    <property type="entry name" value="CGS_like"/>
    <property type="match status" value="1"/>
</dbReference>
<dbReference type="FunFam" id="3.40.640.10:FF:000046">
    <property type="entry name" value="Cystathionine gamma-lyase"/>
    <property type="match status" value="1"/>
</dbReference>
<dbReference type="Gene3D" id="3.90.1150.10">
    <property type="entry name" value="Aspartate Aminotransferase, domain 1"/>
    <property type="match status" value="1"/>
</dbReference>
<dbReference type="Gene3D" id="3.40.640.10">
    <property type="entry name" value="Type I PLP-dependent aspartate aminotransferase-like (Major domain)"/>
    <property type="match status" value="1"/>
</dbReference>
<dbReference type="InterPro" id="IPR000277">
    <property type="entry name" value="Cys/Met-Metab_PyrdxlP-dep_enz"/>
</dbReference>
<dbReference type="InterPro" id="IPR054542">
    <property type="entry name" value="Cys_met_metab_PP"/>
</dbReference>
<dbReference type="InterPro" id="IPR015424">
    <property type="entry name" value="PyrdxlP-dep_Trfase"/>
</dbReference>
<dbReference type="InterPro" id="IPR015421">
    <property type="entry name" value="PyrdxlP-dep_Trfase_major"/>
</dbReference>
<dbReference type="InterPro" id="IPR015422">
    <property type="entry name" value="PyrdxlP-dep_Trfase_small"/>
</dbReference>
<dbReference type="PANTHER" id="PTHR11808:SF80">
    <property type="entry name" value="CYSTATHIONINE GAMMA-LYASE"/>
    <property type="match status" value="1"/>
</dbReference>
<dbReference type="PANTHER" id="PTHR11808">
    <property type="entry name" value="TRANS-SULFURATION ENZYME FAMILY MEMBER"/>
    <property type="match status" value="1"/>
</dbReference>
<dbReference type="Pfam" id="PF01053">
    <property type="entry name" value="Cys_Met_Meta_PP"/>
    <property type="match status" value="1"/>
</dbReference>
<dbReference type="PIRSF" id="PIRSF001434">
    <property type="entry name" value="CGS"/>
    <property type="match status" value="1"/>
</dbReference>
<dbReference type="SUPFAM" id="SSF53383">
    <property type="entry name" value="PLP-dependent transferases"/>
    <property type="match status" value="1"/>
</dbReference>
<dbReference type="PROSITE" id="PS00868">
    <property type="entry name" value="CYS_MET_METAB_PP"/>
    <property type="match status" value="1"/>
</dbReference>
<proteinExistence type="evidence at protein level"/>
<sequence>MRPDKKNLSSLSAATLAVHGGNVADATSGAVRTPLVMANSYLLPEDPATMDWSSPDGLVYTRNQGHNQVCLEKKLAALEGCEAAVVFATGVAALHSVFFSFLKSGDHVIVSDITYQAVWRLFAELLPERYGIEATFVDVGDLDSVRQALRPNTRLIHTEVIANPTTKVADIGALTEIAHAHGALISVDATFTPPPFFRASQQGVDFVVHSLTKYINGHGDAMGGVVIGTQRMIDKIKNDALVDLGATISPFNAWMIMRGSVTLPLRLNQLLSSAGKIAEFLDSDDRIAYVYYPGLASHPQHELARRQFAGKGYGAMMAFAVKGDPDTQNRFVSNLRIITSAVSLGHDESLIVHVGAEGRGGFDKYPEEFRQYGHLRFSVGLEDPEDLISDITAALDETFK</sequence>